<organism>
    <name type="scientific">Francisella tularensis subsp. holarctica (strain FTNF002-00 / FTA)</name>
    <dbReference type="NCBI Taxonomy" id="458234"/>
    <lineage>
        <taxon>Bacteria</taxon>
        <taxon>Pseudomonadati</taxon>
        <taxon>Pseudomonadota</taxon>
        <taxon>Gammaproteobacteria</taxon>
        <taxon>Thiotrichales</taxon>
        <taxon>Francisellaceae</taxon>
        <taxon>Francisella</taxon>
    </lineage>
</organism>
<protein>
    <recommendedName>
        <fullName evidence="1">Large ribosomal subunit protein bL20</fullName>
    </recommendedName>
    <alternativeName>
        <fullName evidence="2">50S ribosomal protein L20</fullName>
    </alternativeName>
</protein>
<keyword id="KW-0687">Ribonucleoprotein</keyword>
<keyword id="KW-0689">Ribosomal protein</keyword>
<keyword id="KW-0694">RNA-binding</keyword>
<keyword id="KW-0699">rRNA-binding</keyword>
<reference key="1">
    <citation type="journal article" date="2009" name="PLoS ONE">
        <title>Complete genome sequence of Francisella tularensis subspecies holarctica FTNF002-00.</title>
        <authorList>
            <person name="Barabote R.D."/>
            <person name="Xie G."/>
            <person name="Brettin T.S."/>
            <person name="Hinrichs S.H."/>
            <person name="Fey P.D."/>
            <person name="Jay J.J."/>
            <person name="Engle J.L."/>
            <person name="Godbole S.D."/>
            <person name="Noronha J.M."/>
            <person name="Scheuermann R.H."/>
            <person name="Zhou L.W."/>
            <person name="Lion C."/>
            <person name="Dempsey M.P."/>
        </authorList>
    </citation>
    <scope>NUCLEOTIDE SEQUENCE [LARGE SCALE GENOMIC DNA]</scope>
    <source>
        <strain>FTNF002-00 / FTA</strain>
    </source>
</reference>
<evidence type="ECO:0000255" key="1">
    <source>
        <dbReference type="HAMAP-Rule" id="MF_00382"/>
    </source>
</evidence>
<evidence type="ECO:0000305" key="2"/>
<feature type="chain" id="PRO_1000048979" description="Large ribosomal subunit protein bL20">
    <location>
        <begin position="1"/>
        <end position="118"/>
    </location>
</feature>
<gene>
    <name evidence="1" type="primary">rplT</name>
    <name type="ordered locus">FTA_1491</name>
</gene>
<comment type="function">
    <text evidence="1">Binds directly to 23S ribosomal RNA and is necessary for the in vitro assembly process of the 50S ribosomal subunit. It is not involved in the protein synthesizing functions of that subunit.</text>
</comment>
<comment type="similarity">
    <text evidence="1">Belongs to the bacterial ribosomal protein bL20 family.</text>
</comment>
<proteinExistence type="inferred from homology"/>
<dbReference type="EMBL" id="CP000803">
    <property type="protein sequence ID" value="ABU61966.1"/>
    <property type="molecule type" value="Genomic_DNA"/>
</dbReference>
<dbReference type="RefSeq" id="WP_003016668.1">
    <property type="nucleotide sequence ID" value="NC_009749.1"/>
</dbReference>
<dbReference type="SMR" id="A7NDB3"/>
<dbReference type="KEGG" id="fta:FTA_1491"/>
<dbReference type="HOGENOM" id="CLU_123265_0_1_6"/>
<dbReference type="GO" id="GO:1990904">
    <property type="term" value="C:ribonucleoprotein complex"/>
    <property type="evidence" value="ECO:0007669"/>
    <property type="project" value="UniProtKB-KW"/>
</dbReference>
<dbReference type="GO" id="GO:0005840">
    <property type="term" value="C:ribosome"/>
    <property type="evidence" value="ECO:0007669"/>
    <property type="project" value="UniProtKB-KW"/>
</dbReference>
<dbReference type="GO" id="GO:0019843">
    <property type="term" value="F:rRNA binding"/>
    <property type="evidence" value="ECO:0007669"/>
    <property type="project" value="UniProtKB-UniRule"/>
</dbReference>
<dbReference type="GO" id="GO:0003735">
    <property type="term" value="F:structural constituent of ribosome"/>
    <property type="evidence" value="ECO:0007669"/>
    <property type="project" value="InterPro"/>
</dbReference>
<dbReference type="GO" id="GO:0000027">
    <property type="term" value="P:ribosomal large subunit assembly"/>
    <property type="evidence" value="ECO:0007669"/>
    <property type="project" value="UniProtKB-UniRule"/>
</dbReference>
<dbReference type="GO" id="GO:0006412">
    <property type="term" value="P:translation"/>
    <property type="evidence" value="ECO:0007669"/>
    <property type="project" value="InterPro"/>
</dbReference>
<dbReference type="CDD" id="cd07026">
    <property type="entry name" value="Ribosomal_L20"/>
    <property type="match status" value="1"/>
</dbReference>
<dbReference type="FunFam" id="1.10.1900.20:FF:000001">
    <property type="entry name" value="50S ribosomal protein L20"/>
    <property type="match status" value="1"/>
</dbReference>
<dbReference type="Gene3D" id="6.10.160.10">
    <property type="match status" value="1"/>
</dbReference>
<dbReference type="Gene3D" id="1.10.1900.20">
    <property type="entry name" value="Ribosomal protein L20"/>
    <property type="match status" value="1"/>
</dbReference>
<dbReference type="HAMAP" id="MF_00382">
    <property type="entry name" value="Ribosomal_bL20"/>
    <property type="match status" value="1"/>
</dbReference>
<dbReference type="InterPro" id="IPR005813">
    <property type="entry name" value="Ribosomal_bL20"/>
</dbReference>
<dbReference type="InterPro" id="IPR049946">
    <property type="entry name" value="RIBOSOMAL_L20_CS"/>
</dbReference>
<dbReference type="InterPro" id="IPR035566">
    <property type="entry name" value="Ribosomal_protein_bL20_C"/>
</dbReference>
<dbReference type="NCBIfam" id="TIGR01032">
    <property type="entry name" value="rplT_bact"/>
    <property type="match status" value="1"/>
</dbReference>
<dbReference type="PANTHER" id="PTHR10986">
    <property type="entry name" value="39S RIBOSOMAL PROTEIN L20"/>
    <property type="match status" value="1"/>
</dbReference>
<dbReference type="Pfam" id="PF00453">
    <property type="entry name" value="Ribosomal_L20"/>
    <property type="match status" value="1"/>
</dbReference>
<dbReference type="PRINTS" id="PR00062">
    <property type="entry name" value="RIBOSOMALL20"/>
</dbReference>
<dbReference type="SUPFAM" id="SSF74731">
    <property type="entry name" value="Ribosomal protein L20"/>
    <property type="match status" value="1"/>
</dbReference>
<dbReference type="PROSITE" id="PS00937">
    <property type="entry name" value="RIBOSOMAL_L20"/>
    <property type="match status" value="1"/>
</dbReference>
<name>RL20_FRATF</name>
<accession>A7NDB3</accession>
<sequence length="118" mass="13349">MSRVKRGVTARARHKKVLNQAKGYYGARSRVYRVAKQAVIKAGQYAYRDRKVKKRTFRSLWIVRINAAARQHDISYSQLINGLNKADVELDRKALAELAVYNKDAFAAVVEKAKAALA</sequence>